<gene>
    <name type="ordered locus">SYNAS_06690</name>
    <name type="ORF">SYN_01734</name>
</gene>
<accession>Q2LR42</accession>
<keyword id="KW-0963">Cytoplasm</keyword>
<keyword id="KW-0378">Hydrolase</keyword>
<keyword id="KW-0540">Nuclease</keyword>
<keyword id="KW-1185">Reference proteome</keyword>
<keyword id="KW-0690">Ribosome biogenesis</keyword>
<organism>
    <name type="scientific">Syntrophus aciditrophicus (strain SB)</name>
    <dbReference type="NCBI Taxonomy" id="56780"/>
    <lineage>
        <taxon>Bacteria</taxon>
        <taxon>Pseudomonadati</taxon>
        <taxon>Thermodesulfobacteriota</taxon>
        <taxon>Syntrophia</taxon>
        <taxon>Syntrophales</taxon>
        <taxon>Syntrophaceae</taxon>
        <taxon>Syntrophus</taxon>
    </lineage>
</organism>
<name>YQGF_SYNAS</name>
<feature type="chain" id="PRO_0000257610" description="Putative pre-16S rRNA nuclease">
    <location>
        <begin position="1"/>
        <end position="150"/>
    </location>
</feature>
<protein>
    <recommendedName>
        <fullName evidence="1">Putative pre-16S rRNA nuclease</fullName>
        <ecNumber evidence="1">3.1.-.-</ecNumber>
    </recommendedName>
</protein>
<proteinExistence type="inferred from homology"/>
<reference key="1">
    <citation type="journal article" date="2007" name="Proc. Natl. Acad. Sci. U.S.A.">
        <title>The genome of Syntrophus aciditrophicus: life at the thermodynamic limit of microbial growth.</title>
        <authorList>
            <person name="McInerney M.J."/>
            <person name="Rohlin L."/>
            <person name="Mouttaki H."/>
            <person name="Kim U."/>
            <person name="Krupp R.S."/>
            <person name="Rios-Hernandez L."/>
            <person name="Sieber J."/>
            <person name="Struchtemeyer C.G."/>
            <person name="Bhattacharyya A."/>
            <person name="Campbell J.W."/>
            <person name="Gunsalus R.P."/>
        </authorList>
    </citation>
    <scope>NUCLEOTIDE SEQUENCE [LARGE SCALE GENOMIC DNA]</scope>
    <source>
        <strain>SB</strain>
    </source>
</reference>
<comment type="function">
    <text evidence="1">Could be a nuclease involved in processing of the 5'-end of pre-16S rRNA.</text>
</comment>
<comment type="subcellular location">
    <subcellularLocation>
        <location evidence="1">Cytoplasm</location>
    </subcellularLocation>
</comment>
<comment type="similarity">
    <text evidence="1">Belongs to the YqgF nuclease family.</text>
</comment>
<dbReference type="EC" id="3.1.-.-" evidence="1"/>
<dbReference type="EMBL" id="CP000252">
    <property type="protein sequence ID" value="ABC76548.1"/>
    <property type="molecule type" value="Genomic_DNA"/>
</dbReference>
<dbReference type="RefSeq" id="WP_011416582.1">
    <property type="nucleotide sequence ID" value="NC_007759.1"/>
</dbReference>
<dbReference type="SMR" id="Q2LR42"/>
<dbReference type="FunCoup" id="Q2LR42">
    <property type="interactions" value="318"/>
</dbReference>
<dbReference type="STRING" id="56780.SYN_01734"/>
<dbReference type="KEGG" id="sat:SYN_01734"/>
<dbReference type="eggNOG" id="COG0816">
    <property type="taxonomic scope" value="Bacteria"/>
</dbReference>
<dbReference type="HOGENOM" id="CLU_098240_2_0_7"/>
<dbReference type="InParanoid" id="Q2LR42"/>
<dbReference type="OrthoDB" id="9796140at2"/>
<dbReference type="Proteomes" id="UP000001933">
    <property type="component" value="Chromosome"/>
</dbReference>
<dbReference type="GO" id="GO:0005829">
    <property type="term" value="C:cytosol"/>
    <property type="evidence" value="ECO:0007669"/>
    <property type="project" value="TreeGrafter"/>
</dbReference>
<dbReference type="GO" id="GO:0004518">
    <property type="term" value="F:nuclease activity"/>
    <property type="evidence" value="ECO:0007669"/>
    <property type="project" value="UniProtKB-KW"/>
</dbReference>
<dbReference type="GO" id="GO:0000967">
    <property type="term" value="P:rRNA 5'-end processing"/>
    <property type="evidence" value="ECO:0007669"/>
    <property type="project" value="UniProtKB-UniRule"/>
</dbReference>
<dbReference type="CDD" id="cd16964">
    <property type="entry name" value="YqgF"/>
    <property type="match status" value="1"/>
</dbReference>
<dbReference type="Gene3D" id="3.30.420.140">
    <property type="entry name" value="YqgF/RNase H-like domain"/>
    <property type="match status" value="1"/>
</dbReference>
<dbReference type="HAMAP" id="MF_00651">
    <property type="entry name" value="Nuclease_YqgF"/>
    <property type="match status" value="1"/>
</dbReference>
<dbReference type="InterPro" id="IPR012337">
    <property type="entry name" value="RNaseH-like_sf"/>
</dbReference>
<dbReference type="InterPro" id="IPR005227">
    <property type="entry name" value="YqgF"/>
</dbReference>
<dbReference type="InterPro" id="IPR006641">
    <property type="entry name" value="YqgF/RNaseH-like_dom"/>
</dbReference>
<dbReference type="InterPro" id="IPR037027">
    <property type="entry name" value="YqgF/RNaseH-like_dom_sf"/>
</dbReference>
<dbReference type="NCBIfam" id="TIGR00250">
    <property type="entry name" value="RNAse_H_YqgF"/>
    <property type="match status" value="1"/>
</dbReference>
<dbReference type="PANTHER" id="PTHR33317">
    <property type="entry name" value="POLYNUCLEOTIDYL TRANSFERASE, RIBONUCLEASE H-LIKE SUPERFAMILY PROTEIN"/>
    <property type="match status" value="1"/>
</dbReference>
<dbReference type="PANTHER" id="PTHR33317:SF4">
    <property type="entry name" value="POLYNUCLEOTIDYL TRANSFERASE, RIBONUCLEASE H-LIKE SUPERFAMILY PROTEIN"/>
    <property type="match status" value="1"/>
</dbReference>
<dbReference type="Pfam" id="PF03652">
    <property type="entry name" value="RuvX"/>
    <property type="match status" value="1"/>
</dbReference>
<dbReference type="SMART" id="SM00732">
    <property type="entry name" value="YqgFc"/>
    <property type="match status" value="1"/>
</dbReference>
<dbReference type="SUPFAM" id="SSF53098">
    <property type="entry name" value="Ribonuclease H-like"/>
    <property type="match status" value="1"/>
</dbReference>
<evidence type="ECO:0000255" key="1">
    <source>
        <dbReference type="HAMAP-Rule" id="MF_00651"/>
    </source>
</evidence>
<sequence>MRILGLDYGEKRIGVALCDELGLTAQALTTVIRKSWRNDVGIIASLVRTYDVEKIVIGYPLRLDGTEGIQCEKVVRFARRLEAALGIPVIRWDETLTTKEAEEILSRSGVPPRKRRGVVDRLAASLILQSYLDAISQEKIPSDACDANES</sequence>